<reference key="1">
    <citation type="journal article" date="2006" name="Environ. Microbiol.">
        <title>Whole genome analysis of the marine Bacteroidetes'Gramella forsetii' reveals adaptations to degradation of polymeric organic matter.</title>
        <authorList>
            <person name="Bauer M."/>
            <person name="Kube M."/>
            <person name="Teeling H."/>
            <person name="Richter M."/>
            <person name="Lombardot T."/>
            <person name="Allers E."/>
            <person name="Wuerdemann C.A."/>
            <person name="Quast C."/>
            <person name="Kuhl H."/>
            <person name="Knaust F."/>
            <person name="Woebken D."/>
            <person name="Bischof K."/>
            <person name="Mussmann M."/>
            <person name="Choudhuri J.V."/>
            <person name="Meyer F."/>
            <person name="Reinhardt R."/>
            <person name="Amann R.I."/>
            <person name="Gloeckner F.O."/>
        </authorList>
    </citation>
    <scope>NUCLEOTIDE SEQUENCE [LARGE SCALE GENOMIC DNA]</scope>
    <source>
        <strain>DSM 17595 / CGMCC 1.15422 / KT0803</strain>
    </source>
</reference>
<proteinExistence type="inferred from homology"/>
<dbReference type="EC" id="6.1.1.15" evidence="1"/>
<dbReference type="EMBL" id="CU207366">
    <property type="protein sequence ID" value="CAL67688.1"/>
    <property type="molecule type" value="Genomic_DNA"/>
</dbReference>
<dbReference type="RefSeq" id="WP_011710591.1">
    <property type="nucleotide sequence ID" value="NC_008571.1"/>
</dbReference>
<dbReference type="SMR" id="A0M4Z3"/>
<dbReference type="STRING" id="411154.GFO_2734"/>
<dbReference type="KEGG" id="gfo:GFO_2734"/>
<dbReference type="eggNOG" id="COG0442">
    <property type="taxonomic scope" value="Bacteria"/>
</dbReference>
<dbReference type="HOGENOM" id="CLU_001882_4_2_10"/>
<dbReference type="OrthoDB" id="9809052at2"/>
<dbReference type="Proteomes" id="UP000000755">
    <property type="component" value="Chromosome"/>
</dbReference>
<dbReference type="GO" id="GO:0017101">
    <property type="term" value="C:aminoacyl-tRNA synthetase multienzyme complex"/>
    <property type="evidence" value="ECO:0007669"/>
    <property type="project" value="TreeGrafter"/>
</dbReference>
<dbReference type="GO" id="GO:0005737">
    <property type="term" value="C:cytoplasm"/>
    <property type="evidence" value="ECO:0007669"/>
    <property type="project" value="UniProtKB-SubCell"/>
</dbReference>
<dbReference type="GO" id="GO:0005524">
    <property type="term" value="F:ATP binding"/>
    <property type="evidence" value="ECO:0007669"/>
    <property type="project" value="UniProtKB-UniRule"/>
</dbReference>
<dbReference type="GO" id="GO:0004827">
    <property type="term" value="F:proline-tRNA ligase activity"/>
    <property type="evidence" value="ECO:0007669"/>
    <property type="project" value="UniProtKB-UniRule"/>
</dbReference>
<dbReference type="GO" id="GO:0006433">
    <property type="term" value="P:prolyl-tRNA aminoacylation"/>
    <property type="evidence" value="ECO:0007669"/>
    <property type="project" value="UniProtKB-UniRule"/>
</dbReference>
<dbReference type="CDD" id="cd00862">
    <property type="entry name" value="ProRS_anticodon_zinc"/>
    <property type="match status" value="1"/>
</dbReference>
<dbReference type="CDD" id="cd00778">
    <property type="entry name" value="ProRS_core_arch_euk"/>
    <property type="match status" value="1"/>
</dbReference>
<dbReference type="FunFam" id="3.40.50.800:FF:000005">
    <property type="entry name" value="bifunctional glutamate/proline--tRNA ligase"/>
    <property type="match status" value="1"/>
</dbReference>
<dbReference type="FunFam" id="3.30.930.10:FF:000023">
    <property type="entry name" value="Proline--tRNA ligase"/>
    <property type="match status" value="1"/>
</dbReference>
<dbReference type="Gene3D" id="3.40.50.800">
    <property type="entry name" value="Anticodon-binding domain"/>
    <property type="match status" value="1"/>
</dbReference>
<dbReference type="Gene3D" id="3.30.930.10">
    <property type="entry name" value="Bira Bifunctional Protein, Domain 2"/>
    <property type="match status" value="1"/>
</dbReference>
<dbReference type="Gene3D" id="3.30.110.30">
    <property type="entry name" value="C-terminal domain of ProRS"/>
    <property type="match status" value="1"/>
</dbReference>
<dbReference type="HAMAP" id="MF_01571">
    <property type="entry name" value="Pro_tRNA_synth_type3"/>
    <property type="match status" value="1"/>
</dbReference>
<dbReference type="InterPro" id="IPR002314">
    <property type="entry name" value="aa-tRNA-synt_IIb"/>
</dbReference>
<dbReference type="InterPro" id="IPR006195">
    <property type="entry name" value="aa-tRNA-synth_II"/>
</dbReference>
<dbReference type="InterPro" id="IPR045864">
    <property type="entry name" value="aa-tRNA-synth_II/BPL/LPL"/>
</dbReference>
<dbReference type="InterPro" id="IPR004154">
    <property type="entry name" value="Anticodon-bd"/>
</dbReference>
<dbReference type="InterPro" id="IPR036621">
    <property type="entry name" value="Anticodon-bd_dom_sf"/>
</dbReference>
<dbReference type="InterPro" id="IPR004499">
    <property type="entry name" value="Pro-tRNA-ligase_IIa_arc-type"/>
</dbReference>
<dbReference type="InterPro" id="IPR016061">
    <property type="entry name" value="Pro-tRNA_ligase_II_C"/>
</dbReference>
<dbReference type="InterPro" id="IPR017449">
    <property type="entry name" value="Pro-tRNA_synth_II"/>
</dbReference>
<dbReference type="InterPro" id="IPR033721">
    <property type="entry name" value="ProRS_core_arch_euk"/>
</dbReference>
<dbReference type="NCBIfam" id="TIGR00408">
    <property type="entry name" value="proS_fam_I"/>
    <property type="match status" value="1"/>
</dbReference>
<dbReference type="PANTHER" id="PTHR43382:SF2">
    <property type="entry name" value="BIFUNCTIONAL GLUTAMATE_PROLINE--TRNA LIGASE"/>
    <property type="match status" value="1"/>
</dbReference>
<dbReference type="PANTHER" id="PTHR43382">
    <property type="entry name" value="PROLYL-TRNA SYNTHETASE"/>
    <property type="match status" value="1"/>
</dbReference>
<dbReference type="Pfam" id="PF03129">
    <property type="entry name" value="HGTP_anticodon"/>
    <property type="match status" value="1"/>
</dbReference>
<dbReference type="Pfam" id="PF09180">
    <property type="entry name" value="ProRS-C_1"/>
    <property type="match status" value="1"/>
</dbReference>
<dbReference type="Pfam" id="PF00587">
    <property type="entry name" value="tRNA-synt_2b"/>
    <property type="match status" value="1"/>
</dbReference>
<dbReference type="SMART" id="SM00946">
    <property type="entry name" value="ProRS-C_1"/>
    <property type="match status" value="1"/>
</dbReference>
<dbReference type="SUPFAM" id="SSF64586">
    <property type="entry name" value="C-terminal domain of ProRS"/>
    <property type="match status" value="1"/>
</dbReference>
<dbReference type="SUPFAM" id="SSF52954">
    <property type="entry name" value="Class II aaRS ABD-related"/>
    <property type="match status" value="1"/>
</dbReference>
<dbReference type="SUPFAM" id="SSF55681">
    <property type="entry name" value="Class II aaRS and biotin synthetases"/>
    <property type="match status" value="1"/>
</dbReference>
<dbReference type="PROSITE" id="PS50862">
    <property type="entry name" value="AA_TRNA_LIGASE_II"/>
    <property type="match status" value="1"/>
</dbReference>
<protein>
    <recommendedName>
        <fullName evidence="1">Proline--tRNA ligase</fullName>
        <ecNumber evidence="1">6.1.1.15</ecNumber>
    </recommendedName>
    <alternativeName>
        <fullName evidence="1">Prolyl-tRNA synthetase</fullName>
        <shortName evidence="1">ProRS</shortName>
    </alternativeName>
</protein>
<keyword id="KW-0030">Aminoacyl-tRNA synthetase</keyword>
<keyword id="KW-0067">ATP-binding</keyword>
<keyword id="KW-0963">Cytoplasm</keyword>
<keyword id="KW-0436">Ligase</keyword>
<keyword id="KW-0547">Nucleotide-binding</keyword>
<keyword id="KW-0648">Protein biosynthesis</keyword>
<feature type="chain" id="PRO_0000288411" description="Proline--tRNA ligase">
    <location>
        <begin position="1"/>
        <end position="492"/>
    </location>
</feature>
<accession>A0M4Z3</accession>
<organism>
    <name type="scientific">Christiangramia forsetii (strain DSM 17595 / CGMCC 1.15422 / KT0803)</name>
    <name type="common">Gramella forsetii</name>
    <dbReference type="NCBI Taxonomy" id="411154"/>
    <lineage>
        <taxon>Bacteria</taxon>
        <taxon>Pseudomonadati</taxon>
        <taxon>Bacteroidota</taxon>
        <taxon>Flavobacteriia</taxon>
        <taxon>Flavobacteriales</taxon>
        <taxon>Flavobacteriaceae</taxon>
        <taxon>Christiangramia</taxon>
    </lineage>
</organism>
<comment type="function">
    <text evidence="1">Catalyzes the attachment of proline to tRNA(Pro) in a two-step reaction: proline is first activated by ATP to form Pro-AMP and then transferred to the acceptor end of tRNA(Pro).</text>
</comment>
<comment type="catalytic activity">
    <reaction evidence="1">
        <text>tRNA(Pro) + L-proline + ATP = L-prolyl-tRNA(Pro) + AMP + diphosphate</text>
        <dbReference type="Rhea" id="RHEA:14305"/>
        <dbReference type="Rhea" id="RHEA-COMP:9700"/>
        <dbReference type="Rhea" id="RHEA-COMP:9702"/>
        <dbReference type="ChEBI" id="CHEBI:30616"/>
        <dbReference type="ChEBI" id="CHEBI:33019"/>
        <dbReference type="ChEBI" id="CHEBI:60039"/>
        <dbReference type="ChEBI" id="CHEBI:78442"/>
        <dbReference type="ChEBI" id="CHEBI:78532"/>
        <dbReference type="ChEBI" id="CHEBI:456215"/>
        <dbReference type="EC" id="6.1.1.15"/>
    </reaction>
</comment>
<comment type="subunit">
    <text evidence="1">Homodimer.</text>
</comment>
<comment type="subcellular location">
    <subcellularLocation>
        <location evidence="1">Cytoplasm</location>
    </subcellularLocation>
</comment>
<comment type="domain">
    <text evidence="1">Consists of three domains: the N-terminal catalytic domain, the anticodon-binding domain and the C-terminal extension.</text>
</comment>
<comment type="similarity">
    <text evidence="1">Belongs to the class-II aminoacyl-tRNA synthetase family. ProS type 3 subfamily.</text>
</comment>
<evidence type="ECO:0000255" key="1">
    <source>
        <dbReference type="HAMAP-Rule" id="MF_01571"/>
    </source>
</evidence>
<gene>
    <name evidence="1" type="primary">proS</name>
    <name type="ordered locus">GFO_2734</name>
</gene>
<name>SYP_CHRFK</name>
<sequence length="492" mass="56025">MGKNLTKRSEDYSKWYNELVVKADLAENSAVRGCMVIKPYGYAIWEKMQAELDRMFKETGHQNAYFPLFVPKHLFEAEEKNAEGFAKECAVVTHYRLKNDPDKPGKLMVDPDAKLEEELVVRPTSEAIIWNTYKNWIQSYRDLPIKVNQWANVVRWEMRTRLFLRTAEFLWQEGHTAHATKDEALEETELMNNIYAEFAENFMAMPVVKGSKTESERFAGALETYCIEALMQDGKALQAGTSHFLGQNFAEAFDVKFATKEGGLEHVWATSWGVSTRLMGALIMTHSDDNGLVLPPNLAPIQVVIVPIYRSEEQLDQISEVANELVKELRAVGVSVKFDNNDNQKPGWKFAQYELQGVPLRLAIGPKDLEKGTVELARRDTLTKEFVNRSEVVEKIKALMTEIQDSLFDKAKQYRNEHITEVDSFDDFKKVLKEKGGFISAHWDGTPETENKIKDLTKATIRCVPFDRKEGAGECVLTGNPSEGRVLFAKAY</sequence>